<protein>
    <recommendedName>
        <fullName evidence="1">N-succinylarginine dihydrolase</fullName>
        <ecNumber evidence="1">3.5.3.23</ecNumber>
    </recommendedName>
</protein>
<keyword id="KW-0056">Arginine metabolism</keyword>
<keyword id="KW-0378">Hydrolase</keyword>
<keyword id="KW-1185">Reference proteome</keyword>
<dbReference type="EC" id="3.5.3.23" evidence="1"/>
<dbReference type="EMBL" id="CP000038">
    <property type="protein sequence ID" value="AAZ88119.1"/>
    <property type="molecule type" value="Genomic_DNA"/>
</dbReference>
<dbReference type="RefSeq" id="WP_000994988.1">
    <property type="nucleotide sequence ID" value="NC_007384.1"/>
</dbReference>
<dbReference type="SMR" id="Q3Z293"/>
<dbReference type="GeneID" id="93775959"/>
<dbReference type="KEGG" id="ssn:SSON_1412"/>
<dbReference type="HOGENOM" id="CLU_053835_0_0_6"/>
<dbReference type="UniPathway" id="UPA00185">
    <property type="reaction ID" value="UER00280"/>
</dbReference>
<dbReference type="Proteomes" id="UP000002529">
    <property type="component" value="Chromosome"/>
</dbReference>
<dbReference type="GO" id="GO:0009015">
    <property type="term" value="F:N-succinylarginine dihydrolase activity"/>
    <property type="evidence" value="ECO:0007669"/>
    <property type="project" value="UniProtKB-UniRule"/>
</dbReference>
<dbReference type="GO" id="GO:0019544">
    <property type="term" value="P:arginine catabolic process to glutamate"/>
    <property type="evidence" value="ECO:0007669"/>
    <property type="project" value="UniProtKB-UniRule"/>
</dbReference>
<dbReference type="GO" id="GO:0019545">
    <property type="term" value="P:arginine catabolic process to succinate"/>
    <property type="evidence" value="ECO:0007669"/>
    <property type="project" value="UniProtKB-UniRule"/>
</dbReference>
<dbReference type="FunFam" id="3.75.10.20:FF:000001">
    <property type="entry name" value="N-succinylarginine dihydrolase"/>
    <property type="match status" value="1"/>
</dbReference>
<dbReference type="Gene3D" id="3.75.10.20">
    <property type="entry name" value="Succinylarginine dihydrolase"/>
    <property type="match status" value="1"/>
</dbReference>
<dbReference type="HAMAP" id="MF_01172">
    <property type="entry name" value="AstB"/>
    <property type="match status" value="1"/>
</dbReference>
<dbReference type="InterPro" id="IPR037031">
    <property type="entry name" value="AstB_sf"/>
</dbReference>
<dbReference type="InterPro" id="IPR007079">
    <property type="entry name" value="SuccinylArg_d-Hdrlase_AstB"/>
</dbReference>
<dbReference type="NCBIfam" id="TIGR03241">
    <property type="entry name" value="arg_catab_astB"/>
    <property type="match status" value="1"/>
</dbReference>
<dbReference type="NCBIfam" id="NF009789">
    <property type="entry name" value="PRK13281.1"/>
    <property type="match status" value="1"/>
</dbReference>
<dbReference type="PANTHER" id="PTHR30420">
    <property type="entry name" value="N-SUCCINYLARGININE DIHYDROLASE"/>
    <property type="match status" value="1"/>
</dbReference>
<dbReference type="PANTHER" id="PTHR30420:SF2">
    <property type="entry name" value="N-SUCCINYLARGININE DIHYDROLASE"/>
    <property type="match status" value="1"/>
</dbReference>
<dbReference type="Pfam" id="PF04996">
    <property type="entry name" value="AstB"/>
    <property type="match status" value="1"/>
</dbReference>
<dbReference type="SUPFAM" id="SSF55909">
    <property type="entry name" value="Pentein"/>
    <property type="match status" value="1"/>
</dbReference>
<gene>
    <name evidence="1" type="primary">astB</name>
    <name type="ordered locus">SSON_1412</name>
</gene>
<organism>
    <name type="scientific">Shigella sonnei (strain Ss046)</name>
    <dbReference type="NCBI Taxonomy" id="300269"/>
    <lineage>
        <taxon>Bacteria</taxon>
        <taxon>Pseudomonadati</taxon>
        <taxon>Pseudomonadota</taxon>
        <taxon>Gammaproteobacteria</taxon>
        <taxon>Enterobacterales</taxon>
        <taxon>Enterobacteriaceae</taxon>
        <taxon>Shigella</taxon>
    </lineage>
</organism>
<reference key="1">
    <citation type="journal article" date="2005" name="Nucleic Acids Res.">
        <title>Genome dynamics and diversity of Shigella species, the etiologic agents of bacillary dysentery.</title>
        <authorList>
            <person name="Yang F."/>
            <person name="Yang J."/>
            <person name="Zhang X."/>
            <person name="Chen L."/>
            <person name="Jiang Y."/>
            <person name="Yan Y."/>
            <person name="Tang X."/>
            <person name="Wang J."/>
            <person name="Xiong Z."/>
            <person name="Dong J."/>
            <person name="Xue Y."/>
            <person name="Zhu Y."/>
            <person name="Xu X."/>
            <person name="Sun L."/>
            <person name="Chen S."/>
            <person name="Nie H."/>
            <person name="Peng J."/>
            <person name="Xu J."/>
            <person name="Wang Y."/>
            <person name="Yuan Z."/>
            <person name="Wen Y."/>
            <person name="Yao Z."/>
            <person name="Shen Y."/>
            <person name="Qiang B."/>
            <person name="Hou Y."/>
            <person name="Yu J."/>
            <person name="Jin Q."/>
        </authorList>
    </citation>
    <scope>NUCLEOTIDE SEQUENCE [LARGE SCALE GENOMIC DNA]</scope>
    <source>
        <strain>Ss046</strain>
    </source>
</reference>
<proteinExistence type="inferred from homology"/>
<evidence type="ECO:0000255" key="1">
    <source>
        <dbReference type="HAMAP-Rule" id="MF_01172"/>
    </source>
</evidence>
<accession>Q3Z293</accession>
<name>ASTB_SHISS</name>
<comment type="function">
    <text evidence="1">Catalyzes the hydrolysis of N(2)-succinylarginine into N(2)-succinylornithine, ammonia and CO(2).</text>
</comment>
<comment type="catalytic activity">
    <reaction evidence="1">
        <text>N(2)-succinyl-L-arginine + 2 H2O + 2 H(+) = N(2)-succinyl-L-ornithine + 2 NH4(+) + CO2</text>
        <dbReference type="Rhea" id="RHEA:19533"/>
        <dbReference type="ChEBI" id="CHEBI:15377"/>
        <dbReference type="ChEBI" id="CHEBI:15378"/>
        <dbReference type="ChEBI" id="CHEBI:16526"/>
        <dbReference type="ChEBI" id="CHEBI:28938"/>
        <dbReference type="ChEBI" id="CHEBI:58241"/>
        <dbReference type="ChEBI" id="CHEBI:58514"/>
        <dbReference type="EC" id="3.5.3.23"/>
    </reaction>
</comment>
<comment type="pathway">
    <text evidence="1">Amino-acid degradation; L-arginine degradation via AST pathway; L-glutamate and succinate from L-arginine: step 2/5.</text>
</comment>
<comment type="subunit">
    <text evidence="1">Homodimer.</text>
</comment>
<comment type="similarity">
    <text evidence="1">Belongs to the succinylarginine dihydrolase family.</text>
</comment>
<sequence length="447" mass="49299">MNAWEVNFDGLVGLTHHYAGLSFGNEASTRHRFQVSNPRLAAKQGLLKMKTLADAGFPQAVIPPHERPFIPVLRQLGFSGSDEQVLEKVARQAPHWLSSVSSASPMWVANAATIAPSADTLDGKVHLTVANLNNKFHRSLEAPVTESLLKAIFNDEEKFSVHSALPQVALLGDEGAANHNRLGGHYGEPGMQLFVYGREEGNDTRPSRYPARQTREASEAVARLNQVNPQQVIFAQQNPDVIDQGVFHNDVIAVSNRQVLFCHQQAFARQSQLLANLRARVNGFMAIEVPATQVSVSDAVSTYLFNSQLLSRDDGSMMLVLPQECREHAGVWGYLNELLAADNPISELKVFDLRESMANGGGPACLRLRVVLTEEERRAVNPAVMMNDTLFNALNDWVDRYYRDRLTAADLADPQLLREGREALDVLSQLLNLGSVYPFQREGGGNG</sequence>
<feature type="chain" id="PRO_0000262379" description="N-succinylarginine dihydrolase">
    <location>
        <begin position="1"/>
        <end position="447"/>
    </location>
</feature>
<feature type="active site" evidence="1">
    <location>
        <position position="174"/>
    </location>
</feature>
<feature type="active site" evidence="1">
    <location>
        <position position="248"/>
    </location>
</feature>
<feature type="active site" description="Nucleophile" evidence="1">
    <location>
        <position position="365"/>
    </location>
</feature>
<feature type="binding site" evidence="1">
    <location>
        <begin position="19"/>
        <end position="28"/>
    </location>
    <ligand>
        <name>substrate</name>
    </ligand>
</feature>
<feature type="binding site" evidence="1">
    <location>
        <position position="110"/>
    </location>
    <ligand>
        <name>substrate</name>
    </ligand>
</feature>
<feature type="binding site" evidence="1">
    <location>
        <begin position="137"/>
        <end position="138"/>
    </location>
    <ligand>
        <name>substrate</name>
    </ligand>
</feature>
<feature type="binding site" evidence="1">
    <location>
        <position position="212"/>
    </location>
    <ligand>
        <name>substrate</name>
    </ligand>
</feature>
<feature type="binding site" evidence="1">
    <location>
        <position position="250"/>
    </location>
    <ligand>
        <name>substrate</name>
    </ligand>
</feature>
<feature type="binding site" evidence="1">
    <location>
        <position position="359"/>
    </location>
    <ligand>
        <name>substrate</name>
    </ligand>
</feature>